<proteinExistence type="inferred from homology"/>
<reference key="1">
    <citation type="submission" date="2006-08" db="EMBL/GenBank/DDBJ databases">
        <title>Complete sequence of Shewanella frigidimarina NCIMB 400.</title>
        <authorList>
            <consortium name="US DOE Joint Genome Institute"/>
            <person name="Copeland A."/>
            <person name="Lucas S."/>
            <person name="Lapidus A."/>
            <person name="Barry K."/>
            <person name="Detter J.C."/>
            <person name="Glavina del Rio T."/>
            <person name="Hammon N."/>
            <person name="Israni S."/>
            <person name="Dalin E."/>
            <person name="Tice H."/>
            <person name="Pitluck S."/>
            <person name="Fredrickson J.K."/>
            <person name="Kolker E."/>
            <person name="McCuel L.A."/>
            <person name="DiChristina T."/>
            <person name="Nealson K.H."/>
            <person name="Newman D."/>
            <person name="Tiedje J.M."/>
            <person name="Zhou J."/>
            <person name="Romine M.F."/>
            <person name="Culley D.E."/>
            <person name="Serres M."/>
            <person name="Chertkov O."/>
            <person name="Brettin T."/>
            <person name="Bruce D."/>
            <person name="Han C."/>
            <person name="Tapia R."/>
            <person name="Gilna P."/>
            <person name="Schmutz J."/>
            <person name="Larimer F."/>
            <person name="Land M."/>
            <person name="Hauser L."/>
            <person name="Kyrpides N."/>
            <person name="Mikhailova N."/>
            <person name="Richardson P."/>
        </authorList>
    </citation>
    <scope>NUCLEOTIDE SEQUENCE [LARGE SCALE GENOMIC DNA]</scope>
    <source>
        <strain>NCIMB 400</strain>
    </source>
</reference>
<sequence>MKASELREKSVEELNAELLGLLREQFNLRMQHATGQLTQTNQLKLVRRNIARVKTIITSKAGV</sequence>
<feature type="chain" id="PRO_1000007599" description="Large ribosomal subunit protein uL29">
    <location>
        <begin position="1"/>
        <end position="63"/>
    </location>
</feature>
<protein>
    <recommendedName>
        <fullName evidence="1">Large ribosomal subunit protein uL29</fullName>
    </recommendedName>
    <alternativeName>
        <fullName evidence="2">50S ribosomal protein L29</fullName>
    </alternativeName>
</protein>
<organism>
    <name type="scientific">Shewanella frigidimarina (strain NCIMB 400)</name>
    <dbReference type="NCBI Taxonomy" id="318167"/>
    <lineage>
        <taxon>Bacteria</taxon>
        <taxon>Pseudomonadati</taxon>
        <taxon>Pseudomonadota</taxon>
        <taxon>Gammaproteobacteria</taxon>
        <taxon>Alteromonadales</taxon>
        <taxon>Shewanellaceae</taxon>
        <taxon>Shewanella</taxon>
    </lineage>
</organism>
<evidence type="ECO:0000255" key="1">
    <source>
        <dbReference type="HAMAP-Rule" id="MF_00374"/>
    </source>
</evidence>
<evidence type="ECO:0000305" key="2"/>
<accession>Q089P6</accession>
<gene>
    <name evidence="1" type="primary">rpmC</name>
    <name type="ordered locus">Sfri_0156</name>
</gene>
<comment type="similarity">
    <text evidence="1">Belongs to the universal ribosomal protein uL29 family.</text>
</comment>
<name>RL29_SHEFN</name>
<keyword id="KW-1185">Reference proteome</keyword>
<keyword id="KW-0687">Ribonucleoprotein</keyword>
<keyword id="KW-0689">Ribosomal protein</keyword>
<dbReference type="EMBL" id="CP000447">
    <property type="protein sequence ID" value="ABI70019.1"/>
    <property type="molecule type" value="Genomic_DNA"/>
</dbReference>
<dbReference type="RefSeq" id="WP_011635647.1">
    <property type="nucleotide sequence ID" value="NC_008345.1"/>
</dbReference>
<dbReference type="SMR" id="Q089P6"/>
<dbReference type="STRING" id="318167.Sfri_0156"/>
<dbReference type="KEGG" id="sfr:Sfri_0156"/>
<dbReference type="eggNOG" id="COG0255">
    <property type="taxonomic scope" value="Bacteria"/>
</dbReference>
<dbReference type="HOGENOM" id="CLU_158491_1_2_6"/>
<dbReference type="OrthoDB" id="9815192at2"/>
<dbReference type="Proteomes" id="UP000000684">
    <property type="component" value="Chromosome"/>
</dbReference>
<dbReference type="GO" id="GO:0022625">
    <property type="term" value="C:cytosolic large ribosomal subunit"/>
    <property type="evidence" value="ECO:0007669"/>
    <property type="project" value="TreeGrafter"/>
</dbReference>
<dbReference type="GO" id="GO:0003735">
    <property type="term" value="F:structural constituent of ribosome"/>
    <property type="evidence" value="ECO:0007669"/>
    <property type="project" value="InterPro"/>
</dbReference>
<dbReference type="GO" id="GO:0006412">
    <property type="term" value="P:translation"/>
    <property type="evidence" value="ECO:0007669"/>
    <property type="project" value="UniProtKB-UniRule"/>
</dbReference>
<dbReference type="CDD" id="cd00427">
    <property type="entry name" value="Ribosomal_L29_HIP"/>
    <property type="match status" value="1"/>
</dbReference>
<dbReference type="FunFam" id="1.10.287.310:FF:000001">
    <property type="entry name" value="50S ribosomal protein L29"/>
    <property type="match status" value="1"/>
</dbReference>
<dbReference type="Gene3D" id="1.10.287.310">
    <property type="match status" value="1"/>
</dbReference>
<dbReference type="HAMAP" id="MF_00374">
    <property type="entry name" value="Ribosomal_uL29"/>
    <property type="match status" value="1"/>
</dbReference>
<dbReference type="InterPro" id="IPR050063">
    <property type="entry name" value="Ribosomal_protein_uL29"/>
</dbReference>
<dbReference type="InterPro" id="IPR001854">
    <property type="entry name" value="Ribosomal_uL29"/>
</dbReference>
<dbReference type="InterPro" id="IPR018254">
    <property type="entry name" value="Ribosomal_uL29_CS"/>
</dbReference>
<dbReference type="InterPro" id="IPR036049">
    <property type="entry name" value="Ribosomal_uL29_sf"/>
</dbReference>
<dbReference type="NCBIfam" id="TIGR00012">
    <property type="entry name" value="L29"/>
    <property type="match status" value="1"/>
</dbReference>
<dbReference type="PANTHER" id="PTHR10916">
    <property type="entry name" value="60S RIBOSOMAL PROTEIN L35/50S RIBOSOMAL PROTEIN L29"/>
    <property type="match status" value="1"/>
</dbReference>
<dbReference type="PANTHER" id="PTHR10916:SF0">
    <property type="entry name" value="LARGE RIBOSOMAL SUBUNIT PROTEIN UL29C"/>
    <property type="match status" value="1"/>
</dbReference>
<dbReference type="Pfam" id="PF00831">
    <property type="entry name" value="Ribosomal_L29"/>
    <property type="match status" value="1"/>
</dbReference>
<dbReference type="SUPFAM" id="SSF46561">
    <property type="entry name" value="Ribosomal protein L29 (L29p)"/>
    <property type="match status" value="1"/>
</dbReference>
<dbReference type="PROSITE" id="PS00579">
    <property type="entry name" value="RIBOSOMAL_L29"/>
    <property type="match status" value="1"/>
</dbReference>